<dbReference type="EC" id="3.1.1.32" evidence="3"/>
<dbReference type="EC" id="3.1.1.26" evidence="3"/>
<dbReference type="EMBL" id="AL132959">
    <property type="protein sequence ID" value="CAB71098.1"/>
    <property type="status" value="ALT_SEQ"/>
    <property type="molecule type" value="Genomic_DNA"/>
</dbReference>
<dbReference type="EMBL" id="CP002686">
    <property type="protein sequence ID" value="AEE80240.1"/>
    <property type="molecule type" value="Genomic_DNA"/>
</dbReference>
<dbReference type="EMBL" id="CP002686">
    <property type="protein sequence ID" value="ANM65459.1"/>
    <property type="molecule type" value="Genomic_DNA"/>
</dbReference>
<dbReference type="EMBL" id="CP002686">
    <property type="protein sequence ID" value="ANM65460.1"/>
    <property type="molecule type" value="Genomic_DNA"/>
</dbReference>
<dbReference type="EMBL" id="BT008609">
    <property type="protein sequence ID" value="AAP40434.1"/>
    <property type="molecule type" value="mRNA"/>
</dbReference>
<dbReference type="EMBL" id="AK228526">
    <property type="protein sequence ID" value="BAF00448.1"/>
    <property type="molecule type" value="mRNA"/>
</dbReference>
<dbReference type="EMBL" id="BT046186">
    <property type="protein sequence ID" value="ACI49785.1"/>
    <property type="molecule type" value="mRNA"/>
</dbReference>
<dbReference type="PIR" id="T47960">
    <property type="entry name" value="T47960"/>
</dbReference>
<dbReference type="RefSeq" id="NP_001327423.1">
    <property type="nucleotide sequence ID" value="NM_001340118.1"/>
</dbReference>
<dbReference type="RefSeq" id="NP_001327424.1">
    <property type="nucleotide sequence ID" value="NM_001340117.1"/>
</dbReference>
<dbReference type="RefSeq" id="NP_191727.2">
    <property type="nucleotide sequence ID" value="NM_116033.5"/>
</dbReference>
<dbReference type="SMR" id="Q7Y220"/>
<dbReference type="FunCoup" id="Q7Y220">
    <property type="interactions" value="334"/>
</dbReference>
<dbReference type="STRING" id="3702.Q7Y220"/>
<dbReference type="ESTHER" id="arath-At3g61680">
    <property type="family name" value="Lipase_3"/>
</dbReference>
<dbReference type="PaxDb" id="3702-AT3G61680.1"/>
<dbReference type="EnsemblPlants" id="AT3G61680.1">
    <property type="protein sequence ID" value="AT3G61680.1"/>
    <property type="gene ID" value="AT3G61680"/>
</dbReference>
<dbReference type="EnsemblPlants" id="AT3G61680.2">
    <property type="protein sequence ID" value="AT3G61680.2"/>
    <property type="gene ID" value="AT3G61680"/>
</dbReference>
<dbReference type="EnsemblPlants" id="AT3G61680.3">
    <property type="protein sequence ID" value="AT3G61680.3"/>
    <property type="gene ID" value="AT3G61680"/>
</dbReference>
<dbReference type="GeneID" id="825341"/>
<dbReference type="Gramene" id="AT3G61680.1">
    <property type="protein sequence ID" value="AT3G61680.1"/>
    <property type="gene ID" value="AT3G61680"/>
</dbReference>
<dbReference type="Gramene" id="AT3G61680.2">
    <property type="protein sequence ID" value="AT3G61680.2"/>
    <property type="gene ID" value="AT3G61680"/>
</dbReference>
<dbReference type="Gramene" id="AT3G61680.3">
    <property type="protein sequence ID" value="AT3G61680.3"/>
    <property type="gene ID" value="AT3G61680"/>
</dbReference>
<dbReference type="KEGG" id="ath:AT3G61680"/>
<dbReference type="Araport" id="AT3G61680"/>
<dbReference type="TAIR" id="AT3G61680">
    <property type="gene designation" value="PLIP1"/>
</dbReference>
<dbReference type="eggNOG" id="ENOG502QSG6">
    <property type="taxonomic scope" value="Eukaryota"/>
</dbReference>
<dbReference type="HOGENOM" id="CLU_016443_1_0_1"/>
<dbReference type="InParanoid" id="Q7Y220"/>
<dbReference type="OMA" id="IFIIQPD"/>
<dbReference type="OrthoDB" id="438440at2759"/>
<dbReference type="PhylomeDB" id="Q7Y220"/>
<dbReference type="PRO" id="PR:Q7Y220"/>
<dbReference type="Proteomes" id="UP000006548">
    <property type="component" value="Chromosome 3"/>
</dbReference>
<dbReference type="ExpressionAtlas" id="Q7Y220">
    <property type="expression patterns" value="baseline and differential"/>
</dbReference>
<dbReference type="GO" id="GO:0009534">
    <property type="term" value="C:chloroplast thylakoid"/>
    <property type="evidence" value="ECO:0000314"/>
    <property type="project" value="TAIR"/>
</dbReference>
<dbReference type="GO" id="GO:0009535">
    <property type="term" value="C:chloroplast thylakoid membrane"/>
    <property type="evidence" value="ECO:0007669"/>
    <property type="project" value="UniProtKB-SubCell"/>
</dbReference>
<dbReference type="GO" id="GO:0047714">
    <property type="term" value="F:galactolipase activity"/>
    <property type="evidence" value="ECO:0007669"/>
    <property type="project" value="UniProtKB-EC"/>
</dbReference>
<dbReference type="GO" id="GO:0008970">
    <property type="term" value="F:phospholipase A1 activity"/>
    <property type="evidence" value="ECO:0007669"/>
    <property type="project" value="UniProtKB-EC"/>
</dbReference>
<dbReference type="GO" id="GO:0015908">
    <property type="term" value="P:fatty acid transport"/>
    <property type="evidence" value="ECO:0000315"/>
    <property type="project" value="TAIR"/>
</dbReference>
<dbReference type="GO" id="GO:0016042">
    <property type="term" value="P:lipid catabolic process"/>
    <property type="evidence" value="ECO:0007669"/>
    <property type="project" value="UniProtKB-KW"/>
</dbReference>
<dbReference type="GO" id="GO:0019432">
    <property type="term" value="P:triglyceride biosynthetic process"/>
    <property type="evidence" value="ECO:0000315"/>
    <property type="project" value="TAIR"/>
</dbReference>
<dbReference type="CDD" id="cd00519">
    <property type="entry name" value="Lipase_3"/>
    <property type="match status" value="1"/>
</dbReference>
<dbReference type="FunFam" id="3.40.50.1820:FF:000254">
    <property type="entry name" value="Phospholipase A1 PLIP3, chloroplastic"/>
    <property type="match status" value="1"/>
</dbReference>
<dbReference type="Gene3D" id="3.40.50.1820">
    <property type="entry name" value="alpha/beta hydrolase"/>
    <property type="match status" value="1"/>
</dbReference>
<dbReference type="InterPro" id="IPR029058">
    <property type="entry name" value="AB_hydrolase_fold"/>
</dbReference>
<dbReference type="InterPro" id="IPR002921">
    <property type="entry name" value="Fungal_lipase-type"/>
</dbReference>
<dbReference type="InterPro" id="IPR043367">
    <property type="entry name" value="PLIP1/2/3"/>
</dbReference>
<dbReference type="PANTHER" id="PTHR46483:SF1">
    <property type="entry name" value="PHOSPHOLIPASE A1 PLIP1, CHLOROPLASTIC"/>
    <property type="match status" value="1"/>
</dbReference>
<dbReference type="PANTHER" id="PTHR46483">
    <property type="entry name" value="PHOSPHOLIPASE A1 PLIP2, CHLOROPLASTIC"/>
    <property type="match status" value="1"/>
</dbReference>
<dbReference type="Pfam" id="PF01764">
    <property type="entry name" value="Lipase_3"/>
    <property type="match status" value="1"/>
</dbReference>
<dbReference type="SUPFAM" id="SSF53474">
    <property type="entry name" value="alpha/beta-Hydrolases"/>
    <property type="match status" value="1"/>
</dbReference>
<name>PLIP1_ARATH</name>
<proteinExistence type="evidence at protein level"/>
<reference key="1">
    <citation type="journal article" date="2000" name="Nature">
        <title>Sequence and analysis of chromosome 3 of the plant Arabidopsis thaliana.</title>
        <authorList>
            <person name="Salanoubat M."/>
            <person name="Lemcke K."/>
            <person name="Rieger M."/>
            <person name="Ansorge W."/>
            <person name="Unseld M."/>
            <person name="Fartmann B."/>
            <person name="Valle G."/>
            <person name="Bloecker H."/>
            <person name="Perez-Alonso M."/>
            <person name="Obermaier B."/>
            <person name="Delseny M."/>
            <person name="Boutry M."/>
            <person name="Grivell L.A."/>
            <person name="Mache R."/>
            <person name="Puigdomenech P."/>
            <person name="De Simone V."/>
            <person name="Choisne N."/>
            <person name="Artiguenave F."/>
            <person name="Robert C."/>
            <person name="Brottier P."/>
            <person name="Wincker P."/>
            <person name="Cattolico L."/>
            <person name="Weissenbach J."/>
            <person name="Saurin W."/>
            <person name="Quetier F."/>
            <person name="Schaefer M."/>
            <person name="Mueller-Auer S."/>
            <person name="Gabel C."/>
            <person name="Fuchs M."/>
            <person name="Benes V."/>
            <person name="Wurmbach E."/>
            <person name="Drzonek H."/>
            <person name="Erfle H."/>
            <person name="Jordan N."/>
            <person name="Bangert S."/>
            <person name="Wiedelmann R."/>
            <person name="Kranz H."/>
            <person name="Voss H."/>
            <person name="Holland R."/>
            <person name="Brandt P."/>
            <person name="Nyakatura G."/>
            <person name="Vezzi A."/>
            <person name="D'Angelo M."/>
            <person name="Pallavicini A."/>
            <person name="Toppo S."/>
            <person name="Simionati B."/>
            <person name="Conrad A."/>
            <person name="Hornischer K."/>
            <person name="Kauer G."/>
            <person name="Loehnert T.-H."/>
            <person name="Nordsiek G."/>
            <person name="Reichelt J."/>
            <person name="Scharfe M."/>
            <person name="Schoen O."/>
            <person name="Bargues M."/>
            <person name="Terol J."/>
            <person name="Climent J."/>
            <person name="Navarro P."/>
            <person name="Collado C."/>
            <person name="Perez-Perez A."/>
            <person name="Ottenwaelder B."/>
            <person name="Duchemin D."/>
            <person name="Cooke R."/>
            <person name="Laudie M."/>
            <person name="Berger-Llauro C."/>
            <person name="Purnelle B."/>
            <person name="Masuy D."/>
            <person name="de Haan M."/>
            <person name="Maarse A.C."/>
            <person name="Alcaraz J.-P."/>
            <person name="Cottet A."/>
            <person name="Casacuberta E."/>
            <person name="Monfort A."/>
            <person name="Argiriou A."/>
            <person name="Flores M."/>
            <person name="Liguori R."/>
            <person name="Vitale D."/>
            <person name="Mannhaupt G."/>
            <person name="Haase D."/>
            <person name="Schoof H."/>
            <person name="Rudd S."/>
            <person name="Zaccaria P."/>
            <person name="Mewes H.-W."/>
            <person name="Mayer K.F.X."/>
            <person name="Kaul S."/>
            <person name="Town C.D."/>
            <person name="Koo H.L."/>
            <person name="Tallon L.J."/>
            <person name="Jenkins J."/>
            <person name="Rooney T."/>
            <person name="Rizzo M."/>
            <person name="Walts A."/>
            <person name="Utterback T."/>
            <person name="Fujii C.Y."/>
            <person name="Shea T.P."/>
            <person name="Creasy T.H."/>
            <person name="Haas B."/>
            <person name="Maiti R."/>
            <person name="Wu D."/>
            <person name="Peterson J."/>
            <person name="Van Aken S."/>
            <person name="Pai G."/>
            <person name="Militscher J."/>
            <person name="Sellers P."/>
            <person name="Gill J.E."/>
            <person name="Feldblyum T.V."/>
            <person name="Preuss D."/>
            <person name="Lin X."/>
            <person name="Nierman W.C."/>
            <person name="Salzberg S.L."/>
            <person name="White O."/>
            <person name="Venter J.C."/>
            <person name="Fraser C.M."/>
            <person name="Kaneko T."/>
            <person name="Nakamura Y."/>
            <person name="Sato S."/>
            <person name="Kato T."/>
            <person name="Asamizu E."/>
            <person name="Sasamoto S."/>
            <person name="Kimura T."/>
            <person name="Idesawa K."/>
            <person name="Kawashima K."/>
            <person name="Kishida Y."/>
            <person name="Kiyokawa C."/>
            <person name="Kohara M."/>
            <person name="Matsumoto M."/>
            <person name="Matsuno A."/>
            <person name="Muraki A."/>
            <person name="Nakayama S."/>
            <person name="Nakazaki N."/>
            <person name="Shinpo S."/>
            <person name="Takeuchi C."/>
            <person name="Wada T."/>
            <person name="Watanabe A."/>
            <person name="Yamada M."/>
            <person name="Yasuda M."/>
            <person name="Tabata S."/>
        </authorList>
    </citation>
    <scope>NUCLEOTIDE SEQUENCE [LARGE SCALE GENOMIC DNA]</scope>
    <source>
        <strain>cv. Columbia</strain>
    </source>
</reference>
<reference key="2">
    <citation type="journal article" date="2017" name="Plant J.">
        <title>Araport11: a complete reannotation of the Arabidopsis thaliana reference genome.</title>
        <authorList>
            <person name="Cheng C.Y."/>
            <person name="Krishnakumar V."/>
            <person name="Chan A.P."/>
            <person name="Thibaud-Nissen F."/>
            <person name="Schobel S."/>
            <person name="Town C.D."/>
        </authorList>
    </citation>
    <scope>GENOME REANNOTATION</scope>
    <source>
        <strain>cv. Columbia</strain>
    </source>
</reference>
<reference key="3">
    <citation type="journal article" date="2003" name="Science">
        <title>Empirical analysis of transcriptional activity in the Arabidopsis genome.</title>
        <authorList>
            <person name="Yamada K."/>
            <person name="Lim J."/>
            <person name="Dale J.M."/>
            <person name="Chen H."/>
            <person name="Shinn P."/>
            <person name="Palm C.J."/>
            <person name="Southwick A.M."/>
            <person name="Wu H.C."/>
            <person name="Kim C.J."/>
            <person name="Nguyen M."/>
            <person name="Pham P.K."/>
            <person name="Cheuk R.F."/>
            <person name="Karlin-Newmann G."/>
            <person name="Liu S.X."/>
            <person name="Lam B."/>
            <person name="Sakano H."/>
            <person name="Wu T."/>
            <person name="Yu G."/>
            <person name="Miranda M."/>
            <person name="Quach H.L."/>
            <person name="Tripp M."/>
            <person name="Chang C.H."/>
            <person name="Lee J.M."/>
            <person name="Toriumi M.J."/>
            <person name="Chan M.M."/>
            <person name="Tang C.C."/>
            <person name="Onodera C.S."/>
            <person name="Deng J.M."/>
            <person name="Akiyama K."/>
            <person name="Ansari Y."/>
            <person name="Arakawa T."/>
            <person name="Banh J."/>
            <person name="Banno F."/>
            <person name="Bowser L."/>
            <person name="Brooks S.Y."/>
            <person name="Carninci P."/>
            <person name="Chao Q."/>
            <person name="Choy N."/>
            <person name="Enju A."/>
            <person name="Goldsmith A.D."/>
            <person name="Gurjal M."/>
            <person name="Hansen N.F."/>
            <person name="Hayashizaki Y."/>
            <person name="Johnson-Hopson C."/>
            <person name="Hsuan V.W."/>
            <person name="Iida K."/>
            <person name="Karnes M."/>
            <person name="Khan S."/>
            <person name="Koesema E."/>
            <person name="Ishida J."/>
            <person name="Jiang P.X."/>
            <person name="Jones T."/>
            <person name="Kawai J."/>
            <person name="Kamiya A."/>
            <person name="Meyers C."/>
            <person name="Nakajima M."/>
            <person name="Narusaka M."/>
            <person name="Seki M."/>
            <person name="Sakurai T."/>
            <person name="Satou M."/>
            <person name="Tamse R."/>
            <person name="Vaysberg M."/>
            <person name="Wallender E.K."/>
            <person name="Wong C."/>
            <person name="Yamamura Y."/>
            <person name="Yuan S."/>
            <person name="Shinozaki K."/>
            <person name="Davis R.W."/>
            <person name="Theologis A."/>
            <person name="Ecker J.R."/>
        </authorList>
    </citation>
    <scope>NUCLEOTIDE SEQUENCE [LARGE SCALE MRNA]</scope>
    <source>
        <strain>cv. Columbia</strain>
    </source>
</reference>
<reference key="4">
    <citation type="submission" date="2006-07" db="EMBL/GenBank/DDBJ databases">
        <title>Large-scale analysis of RIKEN Arabidopsis full-length (RAFL) cDNAs.</title>
        <authorList>
            <person name="Totoki Y."/>
            <person name="Seki M."/>
            <person name="Ishida J."/>
            <person name="Nakajima M."/>
            <person name="Enju A."/>
            <person name="Kamiya A."/>
            <person name="Narusaka M."/>
            <person name="Shin-i T."/>
            <person name="Nakagawa M."/>
            <person name="Sakamoto N."/>
            <person name="Oishi K."/>
            <person name="Kohara Y."/>
            <person name="Kobayashi M."/>
            <person name="Toyoda A."/>
            <person name="Sakaki Y."/>
            <person name="Sakurai T."/>
            <person name="Iida K."/>
            <person name="Akiyama K."/>
            <person name="Satou M."/>
            <person name="Toyoda T."/>
            <person name="Konagaya A."/>
            <person name="Carninci P."/>
            <person name="Kawai J."/>
            <person name="Hayashizaki Y."/>
            <person name="Shinozaki K."/>
        </authorList>
    </citation>
    <scope>NUCLEOTIDE SEQUENCE [LARGE SCALE MRNA]</scope>
    <source>
        <strain>cv. Columbia</strain>
    </source>
</reference>
<reference key="5">
    <citation type="submission" date="2008-10" db="EMBL/GenBank/DDBJ databases">
        <title>Arabidopsis ORF clones.</title>
        <authorList>
            <person name="De Los Reyes C."/>
            <person name="Quan R."/>
            <person name="Chen H."/>
            <person name="Bautista V.R."/>
            <person name="Kim C.J."/>
            <person name="Ecker J.R."/>
        </authorList>
    </citation>
    <scope>NUCLEOTIDE SEQUENCE [LARGE SCALE MRNA]</scope>
    <source>
        <strain>cv. Columbia</strain>
    </source>
</reference>
<reference key="6">
    <citation type="journal article" date="2017" name="Plant Cell">
        <title>A plastid phosphatidylglycerol lipase contributes to the export of acyl groups from plastids for seed oil biosynthesis.</title>
        <authorList>
            <person name="Wang K."/>
            <person name="Froehlich J.E."/>
            <person name="Zienkiewicz A."/>
            <person name="Hersh H.L."/>
            <person name="Benning C."/>
        </authorList>
    </citation>
    <scope>FUNCTION</scope>
    <scope>CATALYTIC ACTIVITY</scope>
    <scope>SUBCELLULAR LOCATION</scope>
    <scope>MUTAGENESIS OF SER-422 AND ASP-483</scope>
    <scope>DISRUPTION PHENOTYPE</scope>
</reference>
<protein>
    <recommendedName>
        <fullName evidence="5">Phospholipase A1 PLIP1, chloroplastic</fullName>
        <ecNumber evidence="3">3.1.1.32</ecNumber>
    </recommendedName>
    <alternativeName>
        <fullName evidence="5">Galactolipase PLIP1</fullName>
        <ecNumber evidence="3">3.1.1.26</ecNumber>
    </alternativeName>
    <alternativeName>
        <fullName evidence="4">Protein PLASTID LIPASE 1</fullName>
    </alternativeName>
</protein>
<sequence length="649" mass="71735">MAFNTAMASTSPAAANDVLREHIGLRRSLSGQDLVLKGGGIRRSSSDNHLCCRSGNNNNRILAVSVRPGMKTSRSVGVFSFQISSSIIPSPIKTLLFETDTSQDEQESDEIEIETEPNLDGAKKANWVERLLEIRRQWKREQKTESGNSDVAEESVDVTCGCEEEEGCIANYGSVNGDWGRESFSRLLVKVSWSEAKKLSQLAYLCNLAYTIPEIKGEDLRRNYGLKFVTSSLEKKAKAAILREKLEQDPTHVPVITSPDLESEKQSQRSASSSASAYKIAASAASYIHSCKEYDLSEPIYKSAAAAQAAASTMTAVVAAGEEEKLEAARELQSLQSSPCEWFVCDDPNTYTRCFVIQGSDSLASWKANLFFEPTKFEDTDVLVHRGIYEAAKGIYEQFLPEITEHLSRHGDRAKFQFTGHSLGGSLSLIVNLMLISRGLVSSEAMKSVVTFGSPFVFCGGEKILAELGLDESHVHCVMMHRDIVPRAFSCNYPDHVALVLKRLNGSFRTHPCLNKNKLLYSPMGKVYILQPSESVSPTHPWLPPGNALYILENSNEGYSPTALRAFLNRPHPLETLSQRAAYGSEGSVLRDHDSKNYVKAVNGVLRQHTKLIVRKARIQRRSVWPVLTSAGRGLNESLTTAEEIMTRV</sequence>
<keyword id="KW-0150">Chloroplast</keyword>
<keyword id="KW-0378">Hydrolase</keyword>
<keyword id="KW-0442">Lipid degradation</keyword>
<keyword id="KW-0443">Lipid metabolism</keyword>
<keyword id="KW-0472">Membrane</keyword>
<keyword id="KW-0934">Plastid</keyword>
<keyword id="KW-1185">Reference proteome</keyword>
<keyword id="KW-0793">Thylakoid</keyword>
<keyword id="KW-0809">Transit peptide</keyword>
<evidence type="ECO:0000250" key="1">
    <source>
        <dbReference type="UniProtKB" id="Q948R1"/>
    </source>
</evidence>
<evidence type="ECO:0000255" key="2"/>
<evidence type="ECO:0000269" key="3">
    <source>
    </source>
</evidence>
<evidence type="ECO:0000303" key="4">
    <source>
    </source>
</evidence>
<evidence type="ECO:0000305" key="5"/>
<evidence type="ECO:0000305" key="6">
    <source>
    </source>
</evidence>
<evidence type="ECO:0000312" key="7">
    <source>
        <dbReference type="Araport" id="AT3G61680"/>
    </source>
</evidence>
<evidence type="ECO:0000312" key="8">
    <source>
        <dbReference type="EMBL" id="CAB71098.1"/>
    </source>
</evidence>
<gene>
    <name evidence="4" type="primary">PLIP1</name>
    <name evidence="7" type="ordered locus">At3g61680</name>
    <name evidence="8" type="ORF">F15G16.70</name>
</gene>
<comment type="function">
    <text evidence="3">Sn-1-specific phospholipase A1 involved in seed oil biosynthesis. Hydrolyzes polyunsaturated acyl groups from a unique chloroplast-specific phosphatidylglycerol (PG) that contains 16:1 delta 3-trans as its second acyl group. The polyunsaturated acyl groups released by PLIP1 are exported from the chloroplast, reincorporated into phosphatidylcholine (PC), and ultimately enter seed triacylglycerol (TAG). In vitro, possesses broad substrate specificity. Can hydrolyze the galactolipid monogalactosyldiacylglycerol (MGDG), and the phoshpolipids phosphatidylcholine (PC), phosphatidylethanolamine (PE), phosphatidic acid (PA), phosphatidylserine (PS) phosphatidylglycerol (PG) and phosphatidylinositol (PI).</text>
</comment>
<comment type="catalytic activity">
    <reaction evidence="3">
        <text>a 1,2-diacyl-sn-glycero-3-phosphocholine + H2O = a 2-acyl-sn-glycero-3-phosphocholine + a fatty acid + H(+)</text>
        <dbReference type="Rhea" id="RHEA:18689"/>
        <dbReference type="ChEBI" id="CHEBI:15377"/>
        <dbReference type="ChEBI" id="CHEBI:15378"/>
        <dbReference type="ChEBI" id="CHEBI:28868"/>
        <dbReference type="ChEBI" id="CHEBI:57643"/>
        <dbReference type="ChEBI" id="CHEBI:57875"/>
        <dbReference type="EC" id="3.1.1.32"/>
    </reaction>
</comment>
<comment type="catalytic activity">
    <reaction evidence="3">
        <text>a 1,2-diacyl-3-O-(beta-D-galactosyl)-sn-glycerol + 2 H2O = 3-beta-D-galactosyl-sn-glycerol + 2 a fatty acid + 2 H(+)</text>
        <dbReference type="Rhea" id="RHEA:13189"/>
        <dbReference type="ChEBI" id="CHEBI:15377"/>
        <dbReference type="ChEBI" id="CHEBI:15378"/>
        <dbReference type="ChEBI" id="CHEBI:15754"/>
        <dbReference type="ChEBI" id="CHEBI:17615"/>
        <dbReference type="ChEBI" id="CHEBI:28868"/>
        <dbReference type="EC" id="3.1.1.26"/>
    </reaction>
</comment>
<comment type="subcellular location">
    <subcellularLocation>
        <location evidence="3">Plastid</location>
        <location evidence="3">Chloroplast thylakoid membrane</location>
        <topology evidence="6">Peripheral membrane protein</topology>
    </subcellularLocation>
</comment>
<comment type="disruption phenotype">
    <text evidence="3">Reduced levels of oil seeds and delay in seed germination.</text>
</comment>
<comment type="miscellaneous">
    <text evidence="3">Plants overexpressing PLIP1 exhibit stunted growth and accumulate anthocyanin under normal growth conditions.</text>
</comment>
<comment type="similarity">
    <text evidence="5">Belongs to the AB hydrolase superfamily. Lipase family.</text>
</comment>
<comment type="sequence caution" evidence="5">
    <conflict type="erroneous gene model prediction">
        <sequence resource="EMBL-CDS" id="CAB71098"/>
    </conflict>
</comment>
<organism>
    <name type="scientific">Arabidopsis thaliana</name>
    <name type="common">Mouse-ear cress</name>
    <dbReference type="NCBI Taxonomy" id="3702"/>
    <lineage>
        <taxon>Eukaryota</taxon>
        <taxon>Viridiplantae</taxon>
        <taxon>Streptophyta</taxon>
        <taxon>Embryophyta</taxon>
        <taxon>Tracheophyta</taxon>
        <taxon>Spermatophyta</taxon>
        <taxon>Magnoliopsida</taxon>
        <taxon>eudicotyledons</taxon>
        <taxon>Gunneridae</taxon>
        <taxon>Pentapetalae</taxon>
        <taxon>rosids</taxon>
        <taxon>malvids</taxon>
        <taxon>Brassicales</taxon>
        <taxon>Brassicaceae</taxon>
        <taxon>Camelineae</taxon>
        <taxon>Arabidopsis</taxon>
    </lineage>
</organism>
<feature type="transit peptide" description="Chloroplast" evidence="2">
    <location>
        <begin position="1"/>
        <end position="67"/>
    </location>
</feature>
<feature type="chain" id="PRO_0000444793" description="Phospholipase A1 PLIP1, chloroplastic">
    <location>
        <begin position="68"/>
        <end position="649"/>
    </location>
</feature>
<feature type="short sequence motif" description="GXSXG" evidence="1">
    <location>
        <begin position="420"/>
        <end position="424"/>
    </location>
</feature>
<feature type="active site" description="Acyl-ester intermediate" evidence="1">
    <location>
        <position position="422"/>
    </location>
</feature>
<feature type="active site" description="Charge relay system" evidence="1">
    <location>
        <position position="483"/>
    </location>
</feature>
<feature type="active site" description="Charge relay system" evidence="1">
    <location>
        <position position="593"/>
    </location>
</feature>
<feature type="mutagenesis site" description="Abolishes lipase activity." evidence="3">
    <original>S</original>
    <variation>A</variation>
    <location>
        <position position="422"/>
    </location>
</feature>
<feature type="mutagenesis site" description="Abolishes lipase activity." evidence="3">
    <original>D</original>
    <variation>A</variation>
    <location>
        <position position="483"/>
    </location>
</feature>
<accession>Q7Y220</accession>
<accession>Q9M370</accession>